<protein>
    <recommendedName>
        <fullName evidence="1">Thymidine kinase</fullName>
        <ecNumber evidence="1">2.7.1.21</ecNumber>
    </recommendedName>
</protein>
<proteinExistence type="inferred from homology"/>
<feature type="chain" id="PRO_0000175064" description="Thymidine kinase">
    <location>
        <begin position="1"/>
        <end position="350"/>
    </location>
</feature>
<feature type="active site" description="Proton acceptor" evidence="1">
    <location>
        <position position="44"/>
    </location>
</feature>
<feature type="binding site" evidence="1">
    <location>
        <begin position="15"/>
        <end position="22"/>
    </location>
    <ligand>
        <name>ATP</name>
        <dbReference type="ChEBI" id="CHEBI:30616"/>
    </ligand>
</feature>
<feature type="binding site" evidence="1">
    <location>
        <position position="88"/>
    </location>
    <ligand>
        <name>substrate</name>
    </ligand>
</feature>
<feature type="binding site" evidence="1">
    <location>
        <position position="178"/>
    </location>
    <ligand>
        <name>ATP</name>
        <dbReference type="ChEBI" id="CHEBI:30616"/>
    </ligand>
</feature>
<feature type="binding site" evidence="1">
    <location>
        <position position="184"/>
    </location>
    <ligand>
        <name>substrate</name>
    </ligand>
</feature>
<reference key="1">
    <citation type="journal article" date="1991" name="Arch. Virol.">
        <title>Nucleotide and amino acid sequence analysis of the thymidine kinase gene of a bovine encephalitis herpesvirus.</title>
        <authorList>
            <person name="Smith G.A."/>
            <person name="Young P.L."/>
            <person name="Mattick J.S."/>
        </authorList>
    </citation>
    <scope>NUCLEOTIDE SEQUENCE [GENOMIC DNA]</scope>
</reference>
<accession>P36226</accession>
<dbReference type="EC" id="2.7.1.21" evidence="1"/>
<dbReference type="EMBL" id="S56149">
    <property type="protein sequence ID" value="AAB19542.1"/>
    <property type="molecule type" value="Genomic_DNA"/>
</dbReference>
<dbReference type="PIR" id="A45663">
    <property type="entry name" value="A45663"/>
</dbReference>
<dbReference type="SMR" id="P36226"/>
<dbReference type="GO" id="GO:0005524">
    <property type="term" value="F:ATP binding"/>
    <property type="evidence" value="ECO:0007669"/>
    <property type="project" value="UniProtKB-KW"/>
</dbReference>
<dbReference type="GO" id="GO:0004797">
    <property type="term" value="F:thymidine kinase activity"/>
    <property type="evidence" value="ECO:0007669"/>
    <property type="project" value="UniProtKB-EC"/>
</dbReference>
<dbReference type="GO" id="GO:0071897">
    <property type="term" value="P:DNA biosynthetic process"/>
    <property type="evidence" value="ECO:0007669"/>
    <property type="project" value="UniProtKB-KW"/>
</dbReference>
<dbReference type="GO" id="GO:0006230">
    <property type="term" value="P:TMP biosynthetic process"/>
    <property type="evidence" value="ECO:0007669"/>
    <property type="project" value="InterPro"/>
</dbReference>
<dbReference type="Gene3D" id="3.40.50.300">
    <property type="entry name" value="P-loop containing nucleotide triphosphate hydrolases"/>
    <property type="match status" value="1"/>
</dbReference>
<dbReference type="HAMAP" id="MF_04029">
    <property type="entry name" value="HSV_KITH"/>
    <property type="match status" value="1"/>
</dbReference>
<dbReference type="InterPro" id="IPR001889">
    <property type="entry name" value="Herpes_TK"/>
</dbReference>
<dbReference type="InterPro" id="IPR027417">
    <property type="entry name" value="P-loop_NTPase"/>
</dbReference>
<dbReference type="Pfam" id="PF00693">
    <property type="entry name" value="Herpes_TK"/>
    <property type="match status" value="1"/>
</dbReference>
<dbReference type="SUPFAM" id="SSF52540">
    <property type="entry name" value="P-loop containing nucleoside triphosphate hydrolases"/>
    <property type="match status" value="1"/>
</dbReference>
<sequence>MAAPALRVVRVYLDGAHGLGKTTTGRALAAAASAAGGPVLFFPEPMAYWRTMFPTDALSGILAASARRAAAQGGRADADAAGLVAYYQARFAAPYLVLHARVAALLAPPEPAPGGDDVVTLVFDRHPLAACLCYPFARYCLREINAEDLLALAATAPLEAPGANLVVCTLPPAEQQRRLAARARPGDRADAGFWPPLRNAYALLANTCAFLGAGGAWRDGWDALGWADADALAALADPRGGGREPVPAPALRDTLFAALKCRELYPGGGADLPAVHAWALDALADRLAALEVFMDVSAAPDACAAAVLGMRPAMRRRRADGAAGATLADLARRFAREMTPGGPEAAPRGL</sequence>
<gene>
    <name evidence="1" type="primary">TK</name>
</gene>
<keyword id="KW-0067">ATP-binding</keyword>
<keyword id="KW-0237">DNA synthesis</keyword>
<keyword id="KW-0244">Early protein</keyword>
<keyword id="KW-0418">Kinase</keyword>
<keyword id="KW-0547">Nucleotide-binding</keyword>
<keyword id="KW-0808">Transferase</keyword>
<evidence type="ECO:0000255" key="1">
    <source>
        <dbReference type="HAMAP-Rule" id="MF_04029"/>
    </source>
</evidence>
<organismHost>
    <name type="scientific">Bos taurus</name>
    <name type="common">Bovine</name>
    <dbReference type="NCBI Taxonomy" id="9913"/>
</organismHost>
<name>KITH_BHV5</name>
<comment type="function">
    <text evidence="1">Catalyzes the transfer of the gamma-phospho group of ATP to thymidine to generate dTMP in the salvage pathway of pyrimidine synthesis. The dTMP serves as a substrate for DNA polymerase during viral DNA replication. Allows the virus to be reactivated and to grow in non-proliferative cells lacking a high concentration of phosphorylated nucleic acid precursors.</text>
</comment>
<comment type="catalytic activity">
    <reaction evidence="1">
        <text>thymidine + ATP = dTMP + ADP + H(+)</text>
        <dbReference type="Rhea" id="RHEA:19129"/>
        <dbReference type="ChEBI" id="CHEBI:15378"/>
        <dbReference type="ChEBI" id="CHEBI:17748"/>
        <dbReference type="ChEBI" id="CHEBI:30616"/>
        <dbReference type="ChEBI" id="CHEBI:63528"/>
        <dbReference type="ChEBI" id="CHEBI:456216"/>
        <dbReference type="EC" id="2.7.1.21"/>
    </reaction>
</comment>
<comment type="subunit">
    <text evidence="1">Homodimer.</text>
</comment>
<comment type="similarity">
    <text evidence="1">Belongs to the herpesviridae thymidine kinase family.</text>
</comment>
<organism>
    <name type="scientific">Bovine herpesvirus 5 (strain N569)</name>
    <name type="common">BoHV-5</name>
    <name type="synonym">Bovine encephalitis herpesvirus</name>
    <dbReference type="NCBI Taxonomy" id="36350"/>
    <lineage>
        <taxon>Viruses</taxon>
        <taxon>Duplodnaviria</taxon>
        <taxon>Heunggongvirae</taxon>
        <taxon>Peploviricota</taxon>
        <taxon>Herviviricetes</taxon>
        <taxon>Herpesvirales</taxon>
        <taxon>Orthoherpesviridae</taxon>
        <taxon>Alphaherpesvirinae</taxon>
        <taxon>Varicellovirus</taxon>
        <taxon>Varicellovirus bovinealpha5</taxon>
    </lineage>
</organism>